<protein>
    <recommendedName>
        <fullName evidence="1">Chaperonin GroEL</fullName>
        <ecNumber evidence="1">5.6.1.7</ecNumber>
    </recommendedName>
    <alternativeName>
        <fullName evidence="1">60 kDa chaperonin</fullName>
    </alternativeName>
    <alternativeName>
        <fullName>65 kDa heat shock protein</fullName>
    </alternativeName>
    <alternativeName>
        <fullName evidence="1">Chaperonin-60</fullName>
        <shortName evidence="1">Cpn60</shortName>
    </alternativeName>
</protein>
<reference key="1">
    <citation type="submission" date="1996-05" db="EMBL/GenBank/DDBJ databases">
        <authorList>
            <person name="Ros C."/>
            <person name="Belak K."/>
        </authorList>
    </citation>
    <scope>NUCLEOTIDE SEQUENCE [GENOMIC DNA]</scope>
    <source>
        <strain>ATCC 14472 / DSM 43283 / Magnussen 921</strain>
    </source>
</reference>
<reference key="2">
    <citation type="journal article" date="1995" name="Rinsho Byori">
        <title>Detection and identification of mycobacteria by PCR-RFLP method.</title>
        <authorList>
            <person name="Hidaka E."/>
            <person name="Ueno I."/>
            <person name="Kawakami Y."/>
            <person name="Furuwatari C."/>
            <person name="Furihata K."/>
            <person name="Katsuyama T."/>
        </authorList>
    </citation>
    <scope>NUCLEOTIDE SEQUENCE [GENOMIC DNA] OF 20-133</scope>
</reference>
<organism>
    <name type="scientific">Mycobacteroides chelonae</name>
    <name type="common">Mycobacterium chelonae</name>
    <dbReference type="NCBI Taxonomy" id="1774"/>
    <lineage>
        <taxon>Bacteria</taxon>
        <taxon>Bacillati</taxon>
        <taxon>Actinomycetota</taxon>
        <taxon>Actinomycetes</taxon>
        <taxon>Mycobacteriales</taxon>
        <taxon>Mycobacteriaceae</taxon>
        <taxon>Mycobacteroides</taxon>
    </lineage>
</organism>
<comment type="function">
    <text evidence="1">Together with its co-chaperonin GroES, plays an essential role in assisting protein folding. The GroEL-GroES system forms a nano-cage that allows encapsulation of the non-native substrate proteins and provides a physical environment optimized to promote and accelerate protein folding.</text>
</comment>
<comment type="catalytic activity">
    <reaction evidence="1">
        <text>ATP + H2O + a folded polypeptide = ADP + phosphate + an unfolded polypeptide.</text>
        <dbReference type="EC" id="5.6.1.7"/>
    </reaction>
</comment>
<comment type="subunit">
    <text evidence="1">Forms a cylinder of 14 subunits composed of two heptameric rings stacked back-to-back. Interacts with the co-chaperonin GroES.</text>
</comment>
<comment type="subcellular location">
    <subcellularLocation>
        <location evidence="1">Cytoplasm</location>
    </subcellularLocation>
</comment>
<comment type="similarity">
    <text evidence="1 2">Belongs to the chaperonin (HSP60) family.</text>
</comment>
<accession>Q49093</accession>
<accession>Q53494</accession>
<gene>
    <name evidence="1" type="primary">groEL</name>
    <name evidence="1" type="synonym">groL</name>
    <name type="synonym">mopA</name>
</gene>
<proteinExistence type="inferred from homology"/>
<evidence type="ECO:0000255" key="1">
    <source>
        <dbReference type="HAMAP-Rule" id="MF_00600"/>
    </source>
</evidence>
<evidence type="ECO:0000305" key="2"/>
<keyword id="KW-0067">ATP-binding</keyword>
<keyword id="KW-0143">Chaperone</keyword>
<keyword id="KW-0963">Cytoplasm</keyword>
<keyword id="KW-0413">Isomerase</keyword>
<keyword id="KW-0547">Nucleotide-binding</keyword>
<keyword id="KW-0346">Stress response</keyword>
<feature type="chain" id="PRO_0000063425" description="Chaperonin GroEL">
    <location>
        <begin position="1" status="less than"/>
        <end position="151" status="greater than"/>
    </location>
</feature>
<feature type="binding site" evidence="1">
    <location>
        <begin position="41"/>
        <end position="45"/>
    </location>
    <ligand>
        <name>ATP</name>
        <dbReference type="ChEBI" id="CHEBI:30616"/>
    </ligand>
</feature>
<feature type="sequence conflict" description="In Ref. 2; AAP31980." evidence="2" ref="2">
    <original>G</original>
    <variation>A</variation>
    <location>
        <position position="126"/>
    </location>
</feature>
<feature type="non-terminal residue">
    <location>
        <position position="1"/>
    </location>
</feature>
<feature type="non-terminal residue">
    <location>
        <position position="151"/>
    </location>
</feature>
<name>CH60_MYCCH</name>
<dbReference type="EC" id="5.6.1.7" evidence="1"/>
<dbReference type="EMBL" id="U55832">
    <property type="protein sequence ID" value="AAC44452.1"/>
    <property type="molecule type" value="Genomic_DNA"/>
</dbReference>
<dbReference type="EMBL" id="S76648">
    <property type="protein sequence ID" value="AAP31980.1"/>
    <property type="molecule type" value="Genomic_DNA"/>
</dbReference>
<dbReference type="SMR" id="Q49093"/>
<dbReference type="STRING" id="1774.GR01_03075"/>
<dbReference type="GO" id="GO:0005737">
    <property type="term" value="C:cytoplasm"/>
    <property type="evidence" value="ECO:0007669"/>
    <property type="project" value="UniProtKB-SubCell"/>
</dbReference>
<dbReference type="GO" id="GO:0005524">
    <property type="term" value="F:ATP binding"/>
    <property type="evidence" value="ECO:0007669"/>
    <property type="project" value="UniProtKB-KW"/>
</dbReference>
<dbReference type="GO" id="GO:0140662">
    <property type="term" value="F:ATP-dependent protein folding chaperone"/>
    <property type="evidence" value="ECO:0007669"/>
    <property type="project" value="InterPro"/>
</dbReference>
<dbReference type="GO" id="GO:0016853">
    <property type="term" value="F:isomerase activity"/>
    <property type="evidence" value="ECO:0007669"/>
    <property type="project" value="UniProtKB-KW"/>
</dbReference>
<dbReference type="GO" id="GO:0042026">
    <property type="term" value="P:protein refolding"/>
    <property type="evidence" value="ECO:0007669"/>
    <property type="project" value="InterPro"/>
</dbReference>
<dbReference type="Gene3D" id="1.10.560.10">
    <property type="entry name" value="GroEL-like equatorial domain"/>
    <property type="match status" value="1"/>
</dbReference>
<dbReference type="Gene3D" id="3.30.260.10">
    <property type="entry name" value="TCP-1-like chaperonin intermediate domain"/>
    <property type="match status" value="1"/>
</dbReference>
<dbReference type="InterPro" id="IPR017998">
    <property type="entry name" value="Chaperone_TCP-1"/>
</dbReference>
<dbReference type="InterPro" id="IPR001844">
    <property type="entry name" value="Cpn60/GroEL"/>
</dbReference>
<dbReference type="InterPro" id="IPR002423">
    <property type="entry name" value="Cpn60/GroEL/TCP-1"/>
</dbReference>
<dbReference type="InterPro" id="IPR027413">
    <property type="entry name" value="GROEL-like_equatorial_sf"/>
</dbReference>
<dbReference type="InterPro" id="IPR027410">
    <property type="entry name" value="TCP-1-like_intermed_sf"/>
</dbReference>
<dbReference type="PANTHER" id="PTHR45633">
    <property type="entry name" value="60 KDA HEAT SHOCK PROTEIN, MITOCHONDRIAL"/>
    <property type="match status" value="1"/>
</dbReference>
<dbReference type="Pfam" id="PF00118">
    <property type="entry name" value="Cpn60_TCP1"/>
    <property type="match status" value="1"/>
</dbReference>
<dbReference type="PRINTS" id="PR00304">
    <property type="entry name" value="TCOMPLEXTCP1"/>
</dbReference>
<dbReference type="SUPFAM" id="SSF48592">
    <property type="entry name" value="GroEL equatorial domain-like"/>
    <property type="match status" value="1"/>
</dbReference>
<sequence>PTITNDGVSIAKEIELEDPYEKIGAELVKEVAKKTDDVAGDGTTTATVLAQALVKEGLRNVAAGANPLGLKRGIEKAVEKVTETLLKSAKEVETKEQIAATAGISAGDQSIGDLIAEAMDKVGNEGVITVEESNTFGLQLELTEGMRFDKG</sequence>